<name>KCY_STRPJ</name>
<gene>
    <name evidence="1" type="primary">cmk</name>
    <name type="ordered locus">SPN23F16170</name>
</gene>
<dbReference type="EC" id="2.7.4.25" evidence="1"/>
<dbReference type="EMBL" id="FM211187">
    <property type="protein sequence ID" value="CAR69393.1"/>
    <property type="molecule type" value="Genomic_DNA"/>
</dbReference>
<dbReference type="RefSeq" id="WP_000849378.1">
    <property type="nucleotide sequence ID" value="NC_011900.1"/>
</dbReference>
<dbReference type="SMR" id="B8ZM16"/>
<dbReference type="GeneID" id="45653168"/>
<dbReference type="KEGG" id="sne:SPN23F16170"/>
<dbReference type="HOGENOM" id="CLU_079959_0_2_9"/>
<dbReference type="GO" id="GO:0005829">
    <property type="term" value="C:cytosol"/>
    <property type="evidence" value="ECO:0007669"/>
    <property type="project" value="TreeGrafter"/>
</dbReference>
<dbReference type="GO" id="GO:0005524">
    <property type="term" value="F:ATP binding"/>
    <property type="evidence" value="ECO:0007669"/>
    <property type="project" value="UniProtKB-UniRule"/>
</dbReference>
<dbReference type="GO" id="GO:0036430">
    <property type="term" value="F:CMP kinase activity"/>
    <property type="evidence" value="ECO:0007669"/>
    <property type="project" value="RHEA"/>
</dbReference>
<dbReference type="GO" id="GO:0036431">
    <property type="term" value="F:dCMP kinase activity"/>
    <property type="evidence" value="ECO:0007669"/>
    <property type="project" value="RHEA"/>
</dbReference>
<dbReference type="GO" id="GO:0015949">
    <property type="term" value="P:nucleobase-containing small molecule interconversion"/>
    <property type="evidence" value="ECO:0007669"/>
    <property type="project" value="TreeGrafter"/>
</dbReference>
<dbReference type="GO" id="GO:0006220">
    <property type="term" value="P:pyrimidine nucleotide metabolic process"/>
    <property type="evidence" value="ECO:0007669"/>
    <property type="project" value="UniProtKB-UniRule"/>
</dbReference>
<dbReference type="CDD" id="cd02020">
    <property type="entry name" value="CMPK"/>
    <property type="match status" value="1"/>
</dbReference>
<dbReference type="FunFam" id="3.40.50.300:FF:000484">
    <property type="entry name" value="Cytidylate kinase"/>
    <property type="match status" value="1"/>
</dbReference>
<dbReference type="Gene3D" id="3.40.50.300">
    <property type="entry name" value="P-loop containing nucleotide triphosphate hydrolases"/>
    <property type="match status" value="1"/>
</dbReference>
<dbReference type="HAMAP" id="MF_00238">
    <property type="entry name" value="Cytidyl_kinase_type1"/>
    <property type="match status" value="1"/>
</dbReference>
<dbReference type="InterPro" id="IPR003136">
    <property type="entry name" value="Cytidylate_kin"/>
</dbReference>
<dbReference type="InterPro" id="IPR011994">
    <property type="entry name" value="Cytidylate_kinase_dom"/>
</dbReference>
<dbReference type="InterPro" id="IPR027417">
    <property type="entry name" value="P-loop_NTPase"/>
</dbReference>
<dbReference type="NCBIfam" id="TIGR00017">
    <property type="entry name" value="cmk"/>
    <property type="match status" value="1"/>
</dbReference>
<dbReference type="PANTHER" id="PTHR21299:SF2">
    <property type="entry name" value="CYTIDYLATE KINASE"/>
    <property type="match status" value="1"/>
</dbReference>
<dbReference type="PANTHER" id="PTHR21299">
    <property type="entry name" value="CYTIDYLATE KINASE/PANTOATE-BETA-ALANINE LIGASE"/>
    <property type="match status" value="1"/>
</dbReference>
<dbReference type="Pfam" id="PF02224">
    <property type="entry name" value="Cytidylate_kin"/>
    <property type="match status" value="1"/>
</dbReference>
<dbReference type="SUPFAM" id="SSF52540">
    <property type="entry name" value="P-loop containing nucleoside triphosphate hydrolases"/>
    <property type="match status" value="1"/>
</dbReference>
<evidence type="ECO:0000255" key="1">
    <source>
        <dbReference type="HAMAP-Rule" id="MF_00238"/>
    </source>
</evidence>
<organism>
    <name type="scientific">Streptococcus pneumoniae (strain ATCC 700669 / Spain 23F-1)</name>
    <dbReference type="NCBI Taxonomy" id="561276"/>
    <lineage>
        <taxon>Bacteria</taxon>
        <taxon>Bacillati</taxon>
        <taxon>Bacillota</taxon>
        <taxon>Bacilli</taxon>
        <taxon>Lactobacillales</taxon>
        <taxon>Streptococcaceae</taxon>
        <taxon>Streptococcus</taxon>
    </lineage>
</organism>
<proteinExistence type="inferred from homology"/>
<feature type="chain" id="PRO_1000125302" description="Cytidylate kinase">
    <location>
        <begin position="1"/>
        <end position="223"/>
    </location>
</feature>
<feature type="binding site" evidence="1">
    <location>
        <begin position="10"/>
        <end position="18"/>
    </location>
    <ligand>
        <name>ATP</name>
        <dbReference type="ChEBI" id="CHEBI:30616"/>
    </ligand>
</feature>
<protein>
    <recommendedName>
        <fullName evidence="1">Cytidylate kinase</fullName>
        <shortName evidence="1">CK</shortName>
        <ecNumber evidence="1">2.7.4.25</ecNumber>
    </recommendedName>
    <alternativeName>
        <fullName evidence="1">Cytidine monophosphate kinase</fullName>
        <shortName evidence="1">CMP kinase</shortName>
    </alternativeName>
</protein>
<reference key="1">
    <citation type="journal article" date="2009" name="J. Bacteriol.">
        <title>Role of conjugative elements in the evolution of the multidrug-resistant pandemic clone Streptococcus pneumoniae Spain23F ST81.</title>
        <authorList>
            <person name="Croucher N.J."/>
            <person name="Walker D."/>
            <person name="Romero P."/>
            <person name="Lennard N."/>
            <person name="Paterson G.K."/>
            <person name="Bason N.C."/>
            <person name="Mitchell A.M."/>
            <person name="Quail M.A."/>
            <person name="Andrew P.W."/>
            <person name="Parkhill J."/>
            <person name="Bentley S.D."/>
            <person name="Mitchell T.J."/>
        </authorList>
    </citation>
    <scope>NUCLEOTIDE SEQUENCE [LARGE SCALE GENOMIC DNA]</scope>
    <source>
        <strain>ATCC 700669 / Spain 23F-1</strain>
    </source>
</reference>
<accession>B8ZM16</accession>
<sequence length="223" mass="24598">MKTIQIAIDGPASSGKSTVAKIIAKDFGFTYLDTGAMYRAATYMALKNQLGVEEVEALLALLDQHPISFGRSETGDQLVFVGDVDITHPIRENEVTNHVSAIAAIPEVREKLVSLQQEIAQQGGIVMDGRDIGTVVLPQAELKIFLVASVDERAERRYKENIAKGIETDLETLKKEIAARDYKDSHRETSPLKQAEDAVYLDTTGLNIQEVVEKIKAEAEKRM</sequence>
<keyword id="KW-0067">ATP-binding</keyword>
<keyword id="KW-0963">Cytoplasm</keyword>
<keyword id="KW-0418">Kinase</keyword>
<keyword id="KW-0547">Nucleotide-binding</keyword>
<keyword id="KW-0808">Transferase</keyword>
<comment type="catalytic activity">
    <reaction evidence="1">
        <text>CMP + ATP = CDP + ADP</text>
        <dbReference type="Rhea" id="RHEA:11600"/>
        <dbReference type="ChEBI" id="CHEBI:30616"/>
        <dbReference type="ChEBI" id="CHEBI:58069"/>
        <dbReference type="ChEBI" id="CHEBI:60377"/>
        <dbReference type="ChEBI" id="CHEBI:456216"/>
        <dbReference type="EC" id="2.7.4.25"/>
    </reaction>
</comment>
<comment type="catalytic activity">
    <reaction evidence="1">
        <text>dCMP + ATP = dCDP + ADP</text>
        <dbReference type="Rhea" id="RHEA:25094"/>
        <dbReference type="ChEBI" id="CHEBI:30616"/>
        <dbReference type="ChEBI" id="CHEBI:57566"/>
        <dbReference type="ChEBI" id="CHEBI:58593"/>
        <dbReference type="ChEBI" id="CHEBI:456216"/>
        <dbReference type="EC" id="2.7.4.25"/>
    </reaction>
</comment>
<comment type="subcellular location">
    <subcellularLocation>
        <location evidence="1">Cytoplasm</location>
    </subcellularLocation>
</comment>
<comment type="similarity">
    <text evidence="1">Belongs to the cytidylate kinase family. Type 1 subfamily.</text>
</comment>